<name>IPI3_BPT4</name>
<organism>
    <name type="scientific">Enterobacteria phage T4</name>
    <name type="common">Bacteriophage T4</name>
    <dbReference type="NCBI Taxonomy" id="10665"/>
    <lineage>
        <taxon>Viruses</taxon>
        <taxon>Duplodnaviria</taxon>
        <taxon>Heunggongvirae</taxon>
        <taxon>Uroviricota</taxon>
        <taxon>Caudoviricetes</taxon>
        <taxon>Straboviridae</taxon>
        <taxon>Tevenvirinae</taxon>
        <taxon>Tequatrovirus</taxon>
    </lineage>
</organism>
<accession>P13302</accession>
<proteinExistence type="evidence at protein level"/>
<gene>
    <name type="primary">ipi3</name>
</gene>
<sequence>MKTYQEFIAEASVVKAKGINKDEWTYRSGNGFDPKTAPIERYLATKASDFKAFAWEGLRWRTDLNIEVDGLKFAHIEDVVASNLDSEFVKADADLRRWNLKLFSKQKGPKFVPKAGKWVIDNKLAKAVNFAGLEFAKHKSSWKGLDAMAFRKEFADVMTKGGFKAEIDTSKGKFKDANIQYAYAVANAARGNS</sequence>
<dbReference type="EMBL" id="X04567">
    <property type="protein sequence ID" value="CAA28213.1"/>
    <property type="molecule type" value="Genomic_DNA"/>
</dbReference>
<dbReference type="EMBL" id="AF158101">
    <property type="protein sequence ID" value="AAD42587.1"/>
    <property type="molecule type" value="Genomic_DNA"/>
</dbReference>
<dbReference type="PIR" id="A36780">
    <property type="entry name" value="HIBPA4"/>
</dbReference>
<dbReference type="KEGG" id="vg:1258595"/>
<dbReference type="OrthoDB" id="9773at10239"/>
<dbReference type="Proteomes" id="UP000009087">
    <property type="component" value="Segment"/>
</dbReference>
<feature type="propeptide" id="PRO_0000003342">
    <location>
        <begin position="1"/>
        <end position="10"/>
    </location>
</feature>
<feature type="chain" id="PRO_0000003343" description="Internal protein III">
    <location>
        <begin position="11"/>
        <end position="193"/>
    </location>
</feature>
<feature type="site" description="Cleavage; by prohead core protease GP21">
    <location>
        <begin position="10"/>
        <end position="11"/>
    </location>
</feature>
<organismHost>
    <name type="scientific">Escherichia coli</name>
    <dbReference type="NCBI Taxonomy" id="562"/>
</organismHost>
<keyword id="KW-0903">Direct protein sequencing</keyword>
<keyword id="KW-1185">Reference proteome</keyword>
<protein>
    <recommendedName>
        <fullName>Internal protein III</fullName>
        <shortName>IpIII</shortName>
    </recommendedName>
</protein>
<comment type="function">
    <text>Internal protein III is one of four proteins in a complex that functions in bacteriophage head maturation.</text>
</comment>
<reference key="1">
    <citation type="journal article" date="1986" name="Nucleic Acids Res.">
        <title>Nucleotide sequence and analysis of the 58.3 to 65.5-kb early region of bacteriophage T4.</title>
        <authorList>
            <person name="Valerie K."/>
            <person name="Stevens J."/>
            <person name="Lynch M."/>
            <person name="Henderson E.E."/>
            <person name="de Riel J.K."/>
        </authorList>
    </citation>
    <scope>NUCLEOTIDE SEQUENCE [GENOMIC DNA]</scope>
</reference>
<reference key="2">
    <citation type="journal article" date="2003" name="Microbiol. Mol. Biol. Rev.">
        <title>Bacteriophage T4 genome.</title>
        <authorList>
            <person name="Miller E.S."/>
            <person name="Kutter E."/>
            <person name="Mosig G."/>
            <person name="Arisaka F."/>
            <person name="Kunisawa T."/>
            <person name="Ruger W."/>
        </authorList>
    </citation>
    <scope>NUCLEOTIDE SEQUENCE [LARGE SCALE GENOMIC DNA]</scope>
</reference>
<reference key="3">
    <citation type="journal article" date="1976" name="Proc. Natl. Acad. Sci. U.S.A.">
        <title>Protein cleavage during virus assembly: a novel specificity of assembly dependent cleavage in bacteriophage T4.</title>
        <authorList>
            <person name="Isobe T."/>
            <person name="Black L.W."/>
            <person name="Tsugita A."/>
        </authorList>
    </citation>
    <scope>PRELIMINARY PROTEIN SEQUENCE OF 1-20</scope>
</reference>